<protein>
    <recommendedName>
        <fullName evidence="1">ATP synthase subunit delta</fullName>
    </recommendedName>
    <alternativeName>
        <fullName evidence="1">ATP synthase F(1) sector subunit delta</fullName>
    </alternativeName>
    <alternativeName>
        <fullName evidence="1">F-type ATPase subunit delta</fullName>
        <shortName evidence="1">F-ATPase subunit delta</shortName>
    </alternativeName>
</protein>
<dbReference type="EMBL" id="CP000554">
    <property type="protein sequence ID" value="ABM77234.1"/>
    <property type="molecule type" value="Genomic_DNA"/>
</dbReference>
<dbReference type="RefSeq" id="WP_011130836.1">
    <property type="nucleotide sequence ID" value="NC_008820.1"/>
</dbReference>
<dbReference type="SMR" id="A2C6X4"/>
<dbReference type="STRING" id="59922.P9303_04821"/>
<dbReference type="KEGG" id="pmf:P9303_04821"/>
<dbReference type="HOGENOM" id="CLU_085114_4_1_3"/>
<dbReference type="BioCyc" id="PMAR59922:G1G80-444-MONOMER"/>
<dbReference type="Proteomes" id="UP000002274">
    <property type="component" value="Chromosome"/>
</dbReference>
<dbReference type="GO" id="GO:0031676">
    <property type="term" value="C:plasma membrane-derived thylakoid membrane"/>
    <property type="evidence" value="ECO:0007669"/>
    <property type="project" value="UniProtKB-SubCell"/>
</dbReference>
<dbReference type="GO" id="GO:0045259">
    <property type="term" value="C:proton-transporting ATP synthase complex"/>
    <property type="evidence" value="ECO:0007669"/>
    <property type="project" value="UniProtKB-KW"/>
</dbReference>
<dbReference type="GO" id="GO:0046933">
    <property type="term" value="F:proton-transporting ATP synthase activity, rotational mechanism"/>
    <property type="evidence" value="ECO:0007669"/>
    <property type="project" value="UniProtKB-UniRule"/>
</dbReference>
<dbReference type="Gene3D" id="1.10.520.20">
    <property type="entry name" value="N-terminal domain of the delta subunit of the F1F0-ATP synthase"/>
    <property type="match status" value="1"/>
</dbReference>
<dbReference type="HAMAP" id="MF_01416">
    <property type="entry name" value="ATP_synth_delta_bact"/>
    <property type="match status" value="1"/>
</dbReference>
<dbReference type="InterPro" id="IPR026015">
    <property type="entry name" value="ATP_synth_OSCP/delta_N_sf"/>
</dbReference>
<dbReference type="InterPro" id="IPR020781">
    <property type="entry name" value="ATPase_OSCP/d_CS"/>
</dbReference>
<dbReference type="InterPro" id="IPR000711">
    <property type="entry name" value="ATPase_OSCP/dsu"/>
</dbReference>
<dbReference type="NCBIfam" id="TIGR01145">
    <property type="entry name" value="ATP_synt_delta"/>
    <property type="match status" value="1"/>
</dbReference>
<dbReference type="PANTHER" id="PTHR11910">
    <property type="entry name" value="ATP SYNTHASE DELTA CHAIN"/>
    <property type="match status" value="1"/>
</dbReference>
<dbReference type="Pfam" id="PF00213">
    <property type="entry name" value="OSCP"/>
    <property type="match status" value="1"/>
</dbReference>
<dbReference type="PRINTS" id="PR00125">
    <property type="entry name" value="ATPASEDELTA"/>
</dbReference>
<dbReference type="SUPFAM" id="SSF47928">
    <property type="entry name" value="N-terminal domain of the delta subunit of the F1F0-ATP synthase"/>
    <property type="match status" value="1"/>
</dbReference>
<dbReference type="PROSITE" id="PS00389">
    <property type="entry name" value="ATPASE_DELTA"/>
    <property type="match status" value="1"/>
</dbReference>
<accession>A2C6X4</accession>
<keyword id="KW-0066">ATP synthesis</keyword>
<keyword id="KW-0139">CF(1)</keyword>
<keyword id="KW-0375">Hydrogen ion transport</keyword>
<keyword id="KW-0406">Ion transport</keyword>
<keyword id="KW-0472">Membrane</keyword>
<keyword id="KW-0793">Thylakoid</keyword>
<keyword id="KW-0813">Transport</keyword>
<evidence type="ECO:0000255" key="1">
    <source>
        <dbReference type="HAMAP-Rule" id="MF_01416"/>
    </source>
</evidence>
<gene>
    <name evidence="1" type="primary">atpH</name>
    <name evidence="1" type="synonym">atpD</name>
    <name type="ordered locus">P9303_04821</name>
</gene>
<sequence>MPLLNTITTPYAEAFLQVAESRKEVDQVVDQAKAVLALWNDCPELSGAMASPVLEVEAKKAALQKLFANQVTPSFLNLLKLLADRQRIGVLDAVLERLIELYREQRNIALATVTSAAELSEQQQAALQKKVQAVANTDKLEINLKIDPDLIGGFVVNVGSKVIDASVAGQVRRLGLALAKVS</sequence>
<reference key="1">
    <citation type="journal article" date="2007" name="PLoS Genet.">
        <title>Patterns and implications of gene gain and loss in the evolution of Prochlorococcus.</title>
        <authorList>
            <person name="Kettler G.C."/>
            <person name="Martiny A.C."/>
            <person name="Huang K."/>
            <person name="Zucker J."/>
            <person name="Coleman M.L."/>
            <person name="Rodrigue S."/>
            <person name="Chen F."/>
            <person name="Lapidus A."/>
            <person name="Ferriera S."/>
            <person name="Johnson J."/>
            <person name="Steglich C."/>
            <person name="Church G.M."/>
            <person name="Richardson P."/>
            <person name="Chisholm S.W."/>
        </authorList>
    </citation>
    <scope>NUCLEOTIDE SEQUENCE [LARGE SCALE GENOMIC DNA]</scope>
    <source>
        <strain>MIT 9303</strain>
    </source>
</reference>
<comment type="function">
    <text evidence="1">F(1)F(0) ATP synthase produces ATP from ADP in the presence of a proton or sodium gradient. F-type ATPases consist of two structural domains, F(1) containing the extramembraneous catalytic core and F(0) containing the membrane proton channel, linked together by a central stalk and a peripheral stalk. During catalysis, ATP synthesis in the catalytic domain of F(1) is coupled via a rotary mechanism of the central stalk subunits to proton translocation.</text>
</comment>
<comment type="function">
    <text evidence="1">This protein is part of the stalk that links CF(0) to CF(1). It either transmits conformational changes from CF(0) to CF(1) or is implicated in proton conduction.</text>
</comment>
<comment type="subunit">
    <text evidence="1">F-type ATPases have 2 components, F(1) - the catalytic core - and F(0) - the membrane proton channel. F(1) has five subunits: alpha(3), beta(3), gamma(1), delta(1), epsilon(1). CF(0) has four main subunits: a(1), b(1), b'(1) and c(10-14). The alpha and beta chains form an alternating ring which encloses part of the gamma chain. F(1) is attached to F(0) by a central stalk formed by the gamma and epsilon chains, while a peripheral stalk is formed by the delta, b and b' chains.</text>
</comment>
<comment type="subcellular location">
    <subcellularLocation>
        <location evidence="1">Cellular thylakoid membrane</location>
        <topology evidence="1">Peripheral membrane protein</topology>
    </subcellularLocation>
</comment>
<comment type="similarity">
    <text evidence="1">Belongs to the ATPase delta chain family.</text>
</comment>
<proteinExistence type="inferred from homology"/>
<organism>
    <name type="scientific">Prochlorococcus marinus (strain MIT 9303)</name>
    <dbReference type="NCBI Taxonomy" id="59922"/>
    <lineage>
        <taxon>Bacteria</taxon>
        <taxon>Bacillati</taxon>
        <taxon>Cyanobacteriota</taxon>
        <taxon>Cyanophyceae</taxon>
        <taxon>Synechococcales</taxon>
        <taxon>Prochlorococcaceae</taxon>
        <taxon>Prochlorococcus</taxon>
    </lineage>
</organism>
<feature type="chain" id="PRO_0000371064" description="ATP synthase subunit delta">
    <location>
        <begin position="1"/>
        <end position="182"/>
    </location>
</feature>
<name>ATPD_PROM3</name>